<protein>
    <recommendedName>
        <fullName evidence="1">Xaa-Pro dipeptidase</fullName>
        <shortName evidence="1">X-Pro dipeptidase</shortName>
        <ecNumber evidence="1">3.4.13.9</ecNumber>
    </recommendedName>
    <alternativeName>
        <fullName evidence="1">Imidodipeptidase</fullName>
    </alternativeName>
    <alternativeName>
        <fullName evidence="1">Proline dipeptidase</fullName>
        <shortName evidence="1">Prolidase</shortName>
    </alternativeName>
</protein>
<feature type="chain" id="PRO_0000303867" description="Xaa-Pro dipeptidase">
    <location>
        <begin position="1"/>
        <end position="443"/>
    </location>
</feature>
<feature type="binding site" evidence="1">
    <location>
        <position position="246"/>
    </location>
    <ligand>
        <name>Mn(2+)</name>
        <dbReference type="ChEBI" id="CHEBI:29035"/>
        <label>2</label>
    </ligand>
</feature>
<feature type="binding site" evidence="1">
    <location>
        <position position="257"/>
    </location>
    <ligand>
        <name>Mn(2+)</name>
        <dbReference type="ChEBI" id="CHEBI:29035"/>
        <label>1</label>
    </ligand>
</feature>
<feature type="binding site" evidence="1">
    <location>
        <position position="257"/>
    </location>
    <ligand>
        <name>Mn(2+)</name>
        <dbReference type="ChEBI" id="CHEBI:29035"/>
        <label>2</label>
    </ligand>
</feature>
<feature type="binding site" evidence="1">
    <location>
        <position position="339"/>
    </location>
    <ligand>
        <name>Mn(2+)</name>
        <dbReference type="ChEBI" id="CHEBI:29035"/>
        <label>1</label>
    </ligand>
</feature>
<feature type="binding site" evidence="1">
    <location>
        <position position="384"/>
    </location>
    <ligand>
        <name>Mn(2+)</name>
        <dbReference type="ChEBI" id="CHEBI:29035"/>
        <label>1</label>
    </ligand>
</feature>
<feature type="binding site" evidence="1">
    <location>
        <position position="423"/>
    </location>
    <ligand>
        <name>Mn(2+)</name>
        <dbReference type="ChEBI" id="CHEBI:29035"/>
        <label>1</label>
    </ligand>
</feature>
<feature type="binding site" evidence="1">
    <location>
        <position position="423"/>
    </location>
    <ligand>
        <name>Mn(2+)</name>
        <dbReference type="ChEBI" id="CHEBI:29035"/>
        <label>2</label>
    </ligand>
</feature>
<organism>
    <name type="scientific">Shigella dysenteriae serotype 1 (strain Sd197)</name>
    <dbReference type="NCBI Taxonomy" id="300267"/>
    <lineage>
        <taxon>Bacteria</taxon>
        <taxon>Pseudomonadati</taxon>
        <taxon>Pseudomonadota</taxon>
        <taxon>Gammaproteobacteria</taxon>
        <taxon>Enterobacterales</taxon>
        <taxon>Enterobacteriaceae</taxon>
        <taxon>Shigella</taxon>
    </lineage>
</organism>
<comment type="function">
    <text evidence="1">Splits dipeptides with a prolyl residue in the C-terminal position.</text>
</comment>
<comment type="catalytic activity">
    <reaction evidence="1">
        <text>Xaa-L-Pro dipeptide + H2O = an L-alpha-amino acid + L-proline</text>
        <dbReference type="Rhea" id="RHEA:76407"/>
        <dbReference type="ChEBI" id="CHEBI:15377"/>
        <dbReference type="ChEBI" id="CHEBI:59869"/>
        <dbReference type="ChEBI" id="CHEBI:60039"/>
        <dbReference type="ChEBI" id="CHEBI:195196"/>
        <dbReference type="EC" id="3.4.13.9"/>
    </reaction>
</comment>
<comment type="cofactor">
    <cofactor evidence="1">
        <name>Mn(2+)</name>
        <dbReference type="ChEBI" id="CHEBI:29035"/>
    </cofactor>
    <text evidence="1">Binds 2 manganese ions per subunit.</text>
</comment>
<comment type="similarity">
    <text evidence="1">Belongs to the peptidase M24B family. Bacterial-type prolidase subfamily.</text>
</comment>
<sequence length="443" mass="50191">MESLASLYKNHIATLQERTRDALTRFKLDALLIHSGELFNVFLDDHPYPFKVNPQFKAWVPVTQVPNCWLLVDGVNKPKLWFYLPVDYWHNVEPLPTSFWTEDVEVIALPKADGIGSLLPAARGNIGYIGPVPERALQLGIEASNINPKGVIDYLHYYRSFKTEYELACMREAQKMAVNGHRAAEEAFRSGMSEFDINIAYLTATGHRDTDVPYSNIVALNEHAAVLHYTKLDHQAPEEMRSFLLDAGAEYNGYAADLTRTWSAKSDNDYAQLVKDVNDEQLALIATMKAGVSYVDYHIQFHQRIAKLLRKHQIITDMSEEAMVENDLTGPFMPHGIGHPLGLQVHDVAGFMQDDSGTHLAAPAKYPYLRCTRILLPGMVLTIEPGIYFIESLLAPWREGQFSKHFNWQKIEALKPFGGIRIEDNVVIHENNVENMTRDLKLA</sequence>
<reference key="1">
    <citation type="journal article" date="2005" name="Nucleic Acids Res.">
        <title>Genome dynamics and diversity of Shigella species, the etiologic agents of bacillary dysentery.</title>
        <authorList>
            <person name="Yang F."/>
            <person name="Yang J."/>
            <person name="Zhang X."/>
            <person name="Chen L."/>
            <person name="Jiang Y."/>
            <person name="Yan Y."/>
            <person name="Tang X."/>
            <person name="Wang J."/>
            <person name="Xiong Z."/>
            <person name="Dong J."/>
            <person name="Xue Y."/>
            <person name="Zhu Y."/>
            <person name="Xu X."/>
            <person name="Sun L."/>
            <person name="Chen S."/>
            <person name="Nie H."/>
            <person name="Peng J."/>
            <person name="Xu J."/>
            <person name="Wang Y."/>
            <person name="Yuan Z."/>
            <person name="Wen Y."/>
            <person name="Yao Z."/>
            <person name="Shen Y."/>
            <person name="Qiang B."/>
            <person name="Hou Y."/>
            <person name="Yu J."/>
            <person name="Jin Q."/>
        </authorList>
    </citation>
    <scope>NUCLEOTIDE SEQUENCE [LARGE SCALE GENOMIC DNA]</scope>
    <source>
        <strain>Sd197</strain>
    </source>
</reference>
<dbReference type="EC" id="3.4.13.9" evidence="1"/>
<dbReference type="EMBL" id="CP000034">
    <property type="protein sequence ID" value="ABB63833.1"/>
    <property type="molecule type" value="Genomic_DNA"/>
</dbReference>
<dbReference type="RefSeq" id="WP_000444581.1">
    <property type="nucleotide sequence ID" value="NC_007606.1"/>
</dbReference>
<dbReference type="RefSeq" id="YP_405324.1">
    <property type="nucleotide sequence ID" value="NC_007606.1"/>
</dbReference>
<dbReference type="SMR" id="Q32A22"/>
<dbReference type="STRING" id="300267.SDY_3898"/>
<dbReference type="MEROPS" id="M24.003"/>
<dbReference type="EnsemblBacteria" id="ABB63833">
    <property type="protein sequence ID" value="ABB63833"/>
    <property type="gene ID" value="SDY_3898"/>
</dbReference>
<dbReference type="KEGG" id="sdy:SDY_3898"/>
<dbReference type="PATRIC" id="fig|300267.13.peg.4606"/>
<dbReference type="HOGENOM" id="CLU_050675_0_0_6"/>
<dbReference type="Proteomes" id="UP000002716">
    <property type="component" value="Chromosome"/>
</dbReference>
<dbReference type="GO" id="GO:0005829">
    <property type="term" value="C:cytosol"/>
    <property type="evidence" value="ECO:0007669"/>
    <property type="project" value="TreeGrafter"/>
</dbReference>
<dbReference type="GO" id="GO:0004177">
    <property type="term" value="F:aminopeptidase activity"/>
    <property type="evidence" value="ECO:0007669"/>
    <property type="project" value="TreeGrafter"/>
</dbReference>
<dbReference type="GO" id="GO:0046872">
    <property type="term" value="F:metal ion binding"/>
    <property type="evidence" value="ECO:0007669"/>
    <property type="project" value="UniProtKB-KW"/>
</dbReference>
<dbReference type="GO" id="GO:0008235">
    <property type="term" value="F:metalloexopeptidase activity"/>
    <property type="evidence" value="ECO:0007669"/>
    <property type="project" value="UniProtKB-UniRule"/>
</dbReference>
<dbReference type="GO" id="GO:0016795">
    <property type="term" value="F:phosphoric triester hydrolase activity"/>
    <property type="evidence" value="ECO:0007669"/>
    <property type="project" value="InterPro"/>
</dbReference>
<dbReference type="GO" id="GO:0102009">
    <property type="term" value="F:proline dipeptidase activity"/>
    <property type="evidence" value="ECO:0007669"/>
    <property type="project" value="UniProtKB-EC"/>
</dbReference>
<dbReference type="GO" id="GO:0006508">
    <property type="term" value="P:proteolysis"/>
    <property type="evidence" value="ECO:0007669"/>
    <property type="project" value="UniProtKB-KW"/>
</dbReference>
<dbReference type="CDD" id="cd01087">
    <property type="entry name" value="Prolidase"/>
    <property type="match status" value="1"/>
</dbReference>
<dbReference type="FunFam" id="3.40.350.10:FF:000002">
    <property type="entry name" value="Xaa-Pro dipeptidase"/>
    <property type="match status" value="1"/>
</dbReference>
<dbReference type="FunFam" id="3.90.230.10:FF:000006">
    <property type="entry name" value="Xaa-Pro dipeptidase"/>
    <property type="match status" value="1"/>
</dbReference>
<dbReference type="Gene3D" id="3.90.230.10">
    <property type="entry name" value="Creatinase/methionine aminopeptidase superfamily"/>
    <property type="match status" value="1"/>
</dbReference>
<dbReference type="Gene3D" id="3.40.350.10">
    <property type="entry name" value="Creatinase/prolidase N-terminal domain"/>
    <property type="match status" value="1"/>
</dbReference>
<dbReference type="HAMAP" id="MF_01279">
    <property type="entry name" value="X_Pro_dipeptid"/>
    <property type="match status" value="1"/>
</dbReference>
<dbReference type="InterPro" id="IPR029149">
    <property type="entry name" value="Creatin/AminoP/Spt16_N"/>
</dbReference>
<dbReference type="InterPro" id="IPR036005">
    <property type="entry name" value="Creatinase/aminopeptidase-like"/>
</dbReference>
<dbReference type="InterPro" id="IPR048819">
    <property type="entry name" value="PepQ_N"/>
</dbReference>
<dbReference type="InterPro" id="IPR000994">
    <property type="entry name" value="Pept_M24"/>
</dbReference>
<dbReference type="InterPro" id="IPR001131">
    <property type="entry name" value="Peptidase_M24B_aminopep-P_CS"/>
</dbReference>
<dbReference type="InterPro" id="IPR052433">
    <property type="entry name" value="X-Pro_dipept-like"/>
</dbReference>
<dbReference type="InterPro" id="IPR022846">
    <property type="entry name" value="X_Pro_dipept"/>
</dbReference>
<dbReference type="NCBIfam" id="NF010133">
    <property type="entry name" value="PRK13607.1"/>
    <property type="match status" value="1"/>
</dbReference>
<dbReference type="PANTHER" id="PTHR43226">
    <property type="entry name" value="XAA-PRO AMINOPEPTIDASE 3"/>
    <property type="match status" value="1"/>
</dbReference>
<dbReference type="PANTHER" id="PTHR43226:SF8">
    <property type="entry name" value="XAA-PRO DIPEPTIDASE"/>
    <property type="match status" value="1"/>
</dbReference>
<dbReference type="Pfam" id="PF21216">
    <property type="entry name" value="PepQ_N"/>
    <property type="match status" value="1"/>
</dbReference>
<dbReference type="Pfam" id="PF00557">
    <property type="entry name" value="Peptidase_M24"/>
    <property type="match status" value="1"/>
</dbReference>
<dbReference type="SUPFAM" id="SSF55920">
    <property type="entry name" value="Creatinase/aminopeptidase"/>
    <property type="match status" value="1"/>
</dbReference>
<dbReference type="PROSITE" id="PS00491">
    <property type="entry name" value="PROLINE_PEPTIDASE"/>
    <property type="match status" value="1"/>
</dbReference>
<name>PEPQ_SHIDS</name>
<keyword id="KW-0224">Dipeptidase</keyword>
<keyword id="KW-0378">Hydrolase</keyword>
<keyword id="KW-0464">Manganese</keyword>
<keyword id="KW-0479">Metal-binding</keyword>
<keyword id="KW-0482">Metalloprotease</keyword>
<keyword id="KW-0645">Protease</keyword>
<keyword id="KW-1185">Reference proteome</keyword>
<gene>
    <name evidence="1" type="primary">pepQ</name>
    <name type="ordered locus">SDY_3898</name>
</gene>
<accession>Q32A22</accession>
<proteinExistence type="inferred from homology"/>
<evidence type="ECO:0000255" key="1">
    <source>
        <dbReference type="HAMAP-Rule" id="MF_01279"/>
    </source>
</evidence>